<accession>C6UFC2</accession>
<reference key="1">
    <citation type="journal article" date="2009" name="J. Mol. Biol.">
        <title>Genome sequences of Escherichia coli B strains REL606 and BL21(DE3).</title>
        <authorList>
            <person name="Jeong H."/>
            <person name="Barbe V."/>
            <person name="Lee C.H."/>
            <person name="Vallenet D."/>
            <person name="Yu D.S."/>
            <person name="Choi S.H."/>
            <person name="Couloux A."/>
            <person name="Lee S.W."/>
            <person name="Yoon S.H."/>
            <person name="Cattolico L."/>
            <person name="Hur C.G."/>
            <person name="Park H.S."/>
            <person name="Segurens B."/>
            <person name="Kim S.C."/>
            <person name="Oh T.K."/>
            <person name="Lenski R.E."/>
            <person name="Studier F.W."/>
            <person name="Daegelen P."/>
            <person name="Kim J.F."/>
        </authorList>
    </citation>
    <scope>NUCLEOTIDE SEQUENCE [LARGE SCALE GENOMIC DNA]</scope>
    <source>
        <strain>B / REL606</strain>
    </source>
</reference>
<protein>
    <recommendedName>
        <fullName evidence="1">Ureidoacrylate amidohydrolase RutB</fullName>
        <ecNumber evidence="1">3.5.1.110</ecNumber>
    </recommendedName>
</protein>
<evidence type="ECO:0000255" key="1">
    <source>
        <dbReference type="HAMAP-Rule" id="MF_00830"/>
    </source>
</evidence>
<sequence length="230" mass="25210">MTTLTARPEAITFDPQQSALIVVDMQNAYATPGGYLDLAGFDVSTTRPVIANIQTAVTAARAAGMLIIWFQNGWDEQYVEAGGPGSPNFHKSNALKTMRKQPQLQGKLLAKGSWDYQLVDELVPQPGDIVLPKPRYSGFFNTPLDSILRSRGIRHLVFTGIATNVCVESTLRDGFFLEYFGVVLEDATHQAGPEFAQKAALFNIETFFGWVSDVETFCDALSPTSFAHIA</sequence>
<feature type="chain" id="PRO_0000402661" description="Ureidoacrylate amidohydrolase RutB">
    <location>
        <begin position="1"/>
        <end position="230"/>
    </location>
</feature>
<feature type="active site" description="Proton acceptor" evidence="1">
    <location>
        <position position="24"/>
    </location>
</feature>
<feature type="active site" evidence="1">
    <location>
        <position position="133"/>
    </location>
</feature>
<feature type="active site" description="Nucleophile" evidence="1">
    <location>
        <position position="166"/>
    </location>
</feature>
<comment type="function">
    <text evidence="1">Hydrolyzes ureidoacrylate to form aminoacrylate and carbamate. The carbamate hydrolyzes spontaneously, thereby releasing one of the nitrogen atoms of the pyrimidine ring as ammonia and one of its carbon atoms as CO2.</text>
</comment>
<comment type="catalytic activity">
    <reaction evidence="1">
        <text>(Z)-3-ureidoacrylate + H2O + H(+) = (Z)-3-aminoacrylate + NH4(+) + CO2</text>
        <dbReference type="Rhea" id="RHEA:42624"/>
        <dbReference type="ChEBI" id="CHEBI:15377"/>
        <dbReference type="ChEBI" id="CHEBI:15378"/>
        <dbReference type="ChEBI" id="CHEBI:16526"/>
        <dbReference type="ChEBI" id="CHEBI:28938"/>
        <dbReference type="ChEBI" id="CHEBI:59891"/>
        <dbReference type="ChEBI" id="CHEBI:59894"/>
        <dbReference type="EC" id="3.5.1.110"/>
    </reaction>
</comment>
<comment type="catalytic activity">
    <reaction evidence="1">
        <text>(Z)-3-ureidoacrylate + H2O = (Z)-3-aminoacrylate + carbamate + H(+)</text>
        <dbReference type="Rhea" id="RHEA:31603"/>
        <dbReference type="ChEBI" id="CHEBI:13941"/>
        <dbReference type="ChEBI" id="CHEBI:15377"/>
        <dbReference type="ChEBI" id="CHEBI:15378"/>
        <dbReference type="ChEBI" id="CHEBI:59891"/>
        <dbReference type="ChEBI" id="CHEBI:59894"/>
    </reaction>
</comment>
<comment type="catalytic activity">
    <reaction evidence="1">
        <text>(Z)-2-methylureidoacrylate + H2O + H(+) = (Z)-2-methylaminoacrylate + NH4(+) + CO2</text>
        <dbReference type="Rhea" id="RHEA:42620"/>
        <dbReference type="ChEBI" id="CHEBI:15377"/>
        <dbReference type="ChEBI" id="CHEBI:15378"/>
        <dbReference type="ChEBI" id="CHEBI:16526"/>
        <dbReference type="ChEBI" id="CHEBI:28938"/>
        <dbReference type="ChEBI" id="CHEBI:143783"/>
        <dbReference type="ChEBI" id="CHEBI:145735"/>
        <dbReference type="EC" id="3.5.1.110"/>
    </reaction>
</comment>
<comment type="induction">
    <text evidence="1">Up-regulated by the nitrogen regulatory protein C (NtrC also called GlnG) and repressed by RutR.</text>
</comment>
<comment type="similarity">
    <text evidence="1">Belongs to the isochorismatase family. RutB subfamily.</text>
</comment>
<proteinExistence type="inferred from homology"/>
<name>RUTB_ECOBR</name>
<organism>
    <name type="scientific">Escherichia coli (strain B / REL606)</name>
    <dbReference type="NCBI Taxonomy" id="413997"/>
    <lineage>
        <taxon>Bacteria</taxon>
        <taxon>Pseudomonadati</taxon>
        <taxon>Pseudomonadota</taxon>
        <taxon>Gammaproteobacteria</taxon>
        <taxon>Enterobacterales</taxon>
        <taxon>Enterobacteriaceae</taxon>
        <taxon>Escherichia</taxon>
    </lineage>
</organism>
<keyword id="KW-0378">Hydrolase</keyword>
<dbReference type="EC" id="3.5.1.110" evidence="1"/>
<dbReference type="EMBL" id="CP000819">
    <property type="protein sequence ID" value="ACT38696.1"/>
    <property type="molecule type" value="Genomic_DNA"/>
</dbReference>
<dbReference type="RefSeq" id="WP_001307100.1">
    <property type="nucleotide sequence ID" value="NC_012967.1"/>
</dbReference>
<dbReference type="SMR" id="C6UFC2"/>
<dbReference type="KEGG" id="ebr:ECB_01014"/>
<dbReference type="HOGENOM" id="CLU_068979_8_0_6"/>
<dbReference type="BioCyc" id="ECOL413997:GCQD-1214-MONOMER"/>
<dbReference type="GO" id="GO:0016811">
    <property type="term" value="F:hydrolase activity, acting on carbon-nitrogen (but not peptide) bonds, in linear amides"/>
    <property type="evidence" value="ECO:0007669"/>
    <property type="project" value="UniProtKB-UniRule"/>
</dbReference>
<dbReference type="GO" id="GO:0019740">
    <property type="term" value="P:nitrogen utilization"/>
    <property type="evidence" value="ECO:0007669"/>
    <property type="project" value="UniProtKB-UniRule"/>
</dbReference>
<dbReference type="GO" id="GO:0006212">
    <property type="term" value="P:uracil catabolic process"/>
    <property type="evidence" value="ECO:0007669"/>
    <property type="project" value="UniProtKB-UniRule"/>
</dbReference>
<dbReference type="CDD" id="cd00431">
    <property type="entry name" value="cysteine_hydrolases"/>
    <property type="match status" value="1"/>
</dbReference>
<dbReference type="FunFam" id="3.40.50.850:FF:000004">
    <property type="entry name" value="Peroxyureidoacrylate/ureidoacrylate amidohydrolase RutB"/>
    <property type="match status" value="1"/>
</dbReference>
<dbReference type="Gene3D" id="3.40.50.850">
    <property type="entry name" value="Isochorismatase-like"/>
    <property type="match status" value="1"/>
</dbReference>
<dbReference type="HAMAP" id="MF_00830">
    <property type="entry name" value="RutB"/>
    <property type="match status" value="1"/>
</dbReference>
<dbReference type="InterPro" id="IPR000868">
    <property type="entry name" value="Isochorismatase-like_dom"/>
</dbReference>
<dbReference type="InterPro" id="IPR050272">
    <property type="entry name" value="Isochorismatase-like_hydrls"/>
</dbReference>
<dbReference type="InterPro" id="IPR036380">
    <property type="entry name" value="Isochorismatase-like_sf"/>
</dbReference>
<dbReference type="InterPro" id="IPR019916">
    <property type="entry name" value="RutB"/>
</dbReference>
<dbReference type="NCBIfam" id="TIGR03614">
    <property type="entry name" value="RutB"/>
    <property type="match status" value="1"/>
</dbReference>
<dbReference type="PANTHER" id="PTHR43540:SF6">
    <property type="entry name" value="ISOCHORISMATASE-LIKE DOMAIN-CONTAINING PROTEIN"/>
    <property type="match status" value="1"/>
</dbReference>
<dbReference type="PANTHER" id="PTHR43540">
    <property type="entry name" value="PEROXYUREIDOACRYLATE/UREIDOACRYLATE AMIDOHYDROLASE-RELATED"/>
    <property type="match status" value="1"/>
</dbReference>
<dbReference type="Pfam" id="PF00857">
    <property type="entry name" value="Isochorismatase"/>
    <property type="match status" value="1"/>
</dbReference>
<dbReference type="SUPFAM" id="SSF52499">
    <property type="entry name" value="Isochorismatase-like hydrolases"/>
    <property type="match status" value="1"/>
</dbReference>
<gene>
    <name evidence="1" type="primary">rutB</name>
    <name type="ordered locus">ECB_01014</name>
</gene>